<name>Y1979_MYCTO</name>
<proteinExistence type="inferred from homology"/>
<accession>P9WQM4</accession>
<accession>L0T8F5</accession>
<accession>O53980</accession>
<accession>Q10875</accession>
<keyword id="KW-1003">Cell membrane</keyword>
<keyword id="KW-0472">Membrane</keyword>
<keyword id="KW-1185">Reference proteome</keyword>
<keyword id="KW-0812">Transmembrane</keyword>
<keyword id="KW-1133">Transmembrane helix</keyword>
<keyword id="KW-0813">Transport</keyword>
<dbReference type="EMBL" id="AE000516">
    <property type="protein sequence ID" value="AAK46306.1"/>
    <property type="molecule type" value="Genomic_DNA"/>
</dbReference>
<dbReference type="PIR" id="F70890">
    <property type="entry name" value="F70890"/>
</dbReference>
<dbReference type="RefSeq" id="WP_003899115.1">
    <property type="nucleotide sequence ID" value="NZ_KK341227.1"/>
</dbReference>
<dbReference type="SMR" id="P9WQM4"/>
<dbReference type="KEGG" id="mtc:MT2031"/>
<dbReference type="PATRIC" id="fig|83331.31.peg.2186"/>
<dbReference type="HOGENOM" id="CLU_007946_15_12_11"/>
<dbReference type="Proteomes" id="UP000001020">
    <property type="component" value="Chromosome"/>
</dbReference>
<dbReference type="GO" id="GO:0005886">
    <property type="term" value="C:plasma membrane"/>
    <property type="evidence" value="ECO:0007669"/>
    <property type="project" value="UniProtKB-SubCell"/>
</dbReference>
<dbReference type="GO" id="GO:0022857">
    <property type="term" value="F:transmembrane transporter activity"/>
    <property type="evidence" value="ECO:0007669"/>
    <property type="project" value="InterPro"/>
</dbReference>
<dbReference type="Gene3D" id="1.20.1740.10">
    <property type="entry name" value="Amino acid/polyamine transporter I"/>
    <property type="match status" value="1"/>
</dbReference>
<dbReference type="InterPro" id="IPR002293">
    <property type="entry name" value="AA/rel_permease1"/>
</dbReference>
<dbReference type="InterPro" id="IPR050367">
    <property type="entry name" value="APC_superfamily"/>
</dbReference>
<dbReference type="PANTHER" id="PTHR42770">
    <property type="entry name" value="AMINO ACID TRANSPORTER-RELATED"/>
    <property type="match status" value="1"/>
</dbReference>
<dbReference type="PANTHER" id="PTHR42770:SF18">
    <property type="entry name" value="ARGININE_AGMATINE ANTIPORTER"/>
    <property type="match status" value="1"/>
</dbReference>
<dbReference type="Pfam" id="PF13520">
    <property type="entry name" value="AA_permease_2"/>
    <property type="match status" value="1"/>
</dbReference>
<dbReference type="PIRSF" id="PIRSF006060">
    <property type="entry name" value="AA_transporter"/>
    <property type="match status" value="1"/>
</dbReference>
<protein>
    <recommendedName>
        <fullName>Uncharacterized transporter MT2031</fullName>
    </recommendedName>
</protein>
<sequence>MVGPRTRGYAIHKLGFCSVVMLGINSIIGAGIFLTPGEVIGLAGPFAPMAYVLAGIFAGVVAIVFATAARYVRTNGASYAYTTAAFGRRIGIYVGVTHAITASIAWGVLASFFVSTLLRVAFPDKAWADAEQLFSVKTLTFLGFIGVLLAINLFGNRAIKWANGTSTVGKAFALSAFIVGGLWIITTQHVNNYATAWSAYSATPYSLLGVAEIGKGTFSSMALATIVALYAFTGFESIANAAEEMDAPDRNLPRAIPIAIFSVGAIYLLTLTVAMLLGSNKIAASDDTVKLAAAIGNATFRTIIVVGALISMFGINVAASFGAPRLWTALADSGVLPTRLSRKNQYDVPMVSFAITASLALAFPLALRFDNLHLTGLAVIARFVQFIIVPIALIALARSQAVEHAAVRRNAFTDKVLPLVAIVVSVGLAVSYDYRCIFLVRGGPNYFSIALIVITFIVVPAMAYLHYYRIIRRVGDRPSTR</sequence>
<comment type="function">
    <text evidence="1">Probable amino-acid or metabolite transport protein.</text>
</comment>
<comment type="subcellular location">
    <subcellularLocation>
        <location evidence="3">Cell membrane</location>
        <topology evidence="3">Multi-pass membrane protein</topology>
    </subcellularLocation>
</comment>
<comment type="similarity">
    <text evidence="3">Belongs to the amino acid-polyamine-organocation (APC) superfamily.</text>
</comment>
<reference key="1">
    <citation type="journal article" date="2002" name="J. Bacteriol.">
        <title>Whole-genome comparison of Mycobacterium tuberculosis clinical and laboratory strains.</title>
        <authorList>
            <person name="Fleischmann R.D."/>
            <person name="Alland D."/>
            <person name="Eisen J.A."/>
            <person name="Carpenter L."/>
            <person name="White O."/>
            <person name="Peterson J.D."/>
            <person name="DeBoy R.T."/>
            <person name="Dodson R.J."/>
            <person name="Gwinn M.L."/>
            <person name="Haft D.H."/>
            <person name="Hickey E.K."/>
            <person name="Kolonay J.F."/>
            <person name="Nelson W.C."/>
            <person name="Umayam L.A."/>
            <person name="Ermolaeva M.D."/>
            <person name="Salzberg S.L."/>
            <person name="Delcher A."/>
            <person name="Utterback T.R."/>
            <person name="Weidman J.F."/>
            <person name="Khouri H.M."/>
            <person name="Gill J."/>
            <person name="Mikula A."/>
            <person name="Bishai W."/>
            <person name="Jacobs W.R. Jr."/>
            <person name="Venter J.C."/>
            <person name="Fraser C.M."/>
        </authorList>
    </citation>
    <scope>NUCLEOTIDE SEQUENCE [LARGE SCALE GENOMIC DNA]</scope>
    <source>
        <strain>CDC 1551 / Oshkosh</strain>
    </source>
</reference>
<organism>
    <name type="scientific">Mycobacterium tuberculosis (strain CDC 1551 / Oshkosh)</name>
    <dbReference type="NCBI Taxonomy" id="83331"/>
    <lineage>
        <taxon>Bacteria</taxon>
        <taxon>Bacillati</taxon>
        <taxon>Actinomycetota</taxon>
        <taxon>Actinomycetes</taxon>
        <taxon>Mycobacteriales</taxon>
        <taxon>Mycobacteriaceae</taxon>
        <taxon>Mycobacterium</taxon>
        <taxon>Mycobacterium tuberculosis complex</taxon>
    </lineage>
</organism>
<gene>
    <name type="ordered locus">MT2031</name>
</gene>
<evidence type="ECO:0000250" key="1"/>
<evidence type="ECO:0000255" key="2"/>
<evidence type="ECO:0000305" key="3"/>
<feature type="chain" id="PRO_0000426750" description="Uncharacterized transporter MT2031">
    <location>
        <begin position="1"/>
        <end position="481"/>
    </location>
</feature>
<feature type="transmembrane region" description="Helical" evidence="2">
    <location>
        <begin position="14"/>
        <end position="34"/>
    </location>
</feature>
<feature type="transmembrane region" description="Helical" evidence="2">
    <location>
        <begin position="46"/>
        <end position="66"/>
    </location>
</feature>
<feature type="transmembrane region" description="Helical" evidence="2">
    <location>
        <begin position="90"/>
        <end position="110"/>
    </location>
</feature>
<feature type="transmembrane region" description="Helical" evidence="2">
    <location>
        <begin position="134"/>
        <end position="154"/>
    </location>
</feature>
<feature type="transmembrane region" description="Helical" evidence="2">
    <location>
        <begin position="167"/>
        <end position="187"/>
    </location>
</feature>
<feature type="transmembrane region" description="Helical" evidence="2">
    <location>
        <begin position="218"/>
        <end position="238"/>
    </location>
</feature>
<feature type="transmembrane region" description="Helical" evidence="2">
    <location>
        <begin position="258"/>
        <end position="278"/>
    </location>
</feature>
<feature type="transmembrane region" description="Helical" evidence="2">
    <location>
        <begin position="303"/>
        <end position="323"/>
    </location>
</feature>
<feature type="transmembrane region" description="Helical" evidence="2">
    <location>
        <begin position="377"/>
        <end position="397"/>
    </location>
</feature>
<feature type="transmembrane region" description="Helical" evidence="2">
    <location>
        <begin position="411"/>
        <end position="431"/>
    </location>
</feature>
<feature type="transmembrane region" description="Helical" evidence="2">
    <location>
        <begin position="446"/>
        <end position="466"/>
    </location>
</feature>